<reference key="1">
    <citation type="journal article" date="2005" name="Mol. Biol. Evol.">
        <title>Evolution of bitter taste receptors in humans and apes.</title>
        <authorList>
            <person name="Fischer A."/>
            <person name="Gilad Y."/>
            <person name="Man O."/>
            <person name="Paeaebo S."/>
        </authorList>
    </citation>
    <scope>NUCLEOTIDE SEQUENCE [GENOMIC DNA]</scope>
</reference>
<keyword id="KW-0297">G-protein coupled receptor</keyword>
<keyword id="KW-0325">Glycoprotein</keyword>
<keyword id="KW-0472">Membrane</keyword>
<keyword id="KW-0675">Receptor</keyword>
<keyword id="KW-0716">Sensory transduction</keyword>
<keyword id="KW-0919">Taste</keyword>
<keyword id="KW-0807">Transducer</keyword>
<keyword id="KW-0812">Transmembrane</keyword>
<keyword id="KW-1133">Transmembrane helix</keyword>
<proteinExistence type="inferred from homology"/>
<feature type="chain" id="PRO_0000082242" description="Taste receptor type 2 member 10">
    <location>
        <begin position="1"/>
        <end position="308"/>
    </location>
</feature>
<feature type="topological domain" description="Extracellular" evidence="2">
    <location>
        <begin position="1"/>
        <end position="6"/>
    </location>
</feature>
<feature type="transmembrane region" description="Helical; Name=1" evidence="2">
    <location>
        <begin position="7"/>
        <end position="27"/>
    </location>
</feature>
<feature type="topological domain" description="Cytoplasmic" evidence="2">
    <location>
        <begin position="28"/>
        <end position="42"/>
    </location>
</feature>
<feature type="transmembrane region" description="Helical; Name=2" evidence="2">
    <location>
        <begin position="43"/>
        <end position="63"/>
    </location>
</feature>
<feature type="topological domain" description="Extracellular" evidence="2">
    <location>
        <begin position="64"/>
        <end position="100"/>
    </location>
</feature>
<feature type="transmembrane region" description="Helical; Name=3" evidence="2">
    <location>
        <begin position="101"/>
        <end position="121"/>
    </location>
</feature>
<feature type="topological domain" description="Cytoplasmic" evidence="2">
    <location>
        <begin position="122"/>
        <end position="126"/>
    </location>
</feature>
<feature type="transmembrane region" description="Helical; Name=4" evidence="2">
    <location>
        <begin position="127"/>
        <end position="147"/>
    </location>
</feature>
<feature type="topological domain" description="Extracellular" evidence="2">
    <location>
        <begin position="148"/>
        <end position="179"/>
    </location>
</feature>
<feature type="transmembrane region" description="Helical; Name=5" evidence="2">
    <location>
        <begin position="180"/>
        <end position="200"/>
    </location>
</feature>
<feature type="topological domain" description="Cytoplasmic" evidence="2">
    <location>
        <begin position="201"/>
        <end position="227"/>
    </location>
</feature>
<feature type="transmembrane region" description="Helical; Name=6" evidence="2">
    <location>
        <begin position="228"/>
        <end position="248"/>
    </location>
</feature>
<feature type="topological domain" description="Extracellular" evidence="2">
    <location>
        <begin position="249"/>
        <end position="257"/>
    </location>
</feature>
<feature type="transmembrane region" description="Helical; Name=7" evidence="2">
    <location>
        <begin position="258"/>
        <end position="278"/>
    </location>
</feature>
<feature type="topological domain" description="Cytoplasmic" evidence="2">
    <location>
        <begin position="279"/>
        <end position="308"/>
    </location>
</feature>
<feature type="glycosylation site" description="N-linked (GlcNAc...) asparagine" evidence="2">
    <location>
        <position position="92"/>
    </location>
</feature>
<feature type="glycosylation site" description="N-linked (GlcNAc...) asparagine" evidence="2">
    <location>
        <position position="158"/>
    </location>
</feature>
<gene>
    <name type="primary">TAS2R10</name>
</gene>
<organism>
    <name type="scientific">Pongo pygmaeus</name>
    <name type="common">Bornean orangutan</name>
    <dbReference type="NCBI Taxonomy" id="9600"/>
    <lineage>
        <taxon>Eukaryota</taxon>
        <taxon>Metazoa</taxon>
        <taxon>Chordata</taxon>
        <taxon>Craniata</taxon>
        <taxon>Vertebrata</taxon>
        <taxon>Euteleostomi</taxon>
        <taxon>Mammalia</taxon>
        <taxon>Eutheria</taxon>
        <taxon>Euarchontoglires</taxon>
        <taxon>Primates</taxon>
        <taxon>Haplorrhini</taxon>
        <taxon>Catarrhini</taxon>
        <taxon>Hominidae</taxon>
        <taxon>Pongo</taxon>
    </lineage>
</organism>
<accession>Q645V0</accession>
<name>T2R10_PONPY</name>
<protein>
    <recommendedName>
        <fullName>Taste receptor type 2 member 10</fullName>
        <shortName>T2R10</shortName>
    </recommendedName>
</protein>
<comment type="function">
    <text evidence="1">Receptor that may play a role in the perception of bitterness and is gustducin-linked. May play a role in sensing the chemical composition of the gastrointestinal content. The activity of this receptor may stimulate alpha gustducin, mediate PLC-beta-2 activation and lead to the gating of TRPM5 (By similarity).</text>
</comment>
<comment type="subcellular location">
    <subcellularLocation>
        <location>Membrane</location>
        <topology>Multi-pass membrane protein</topology>
    </subcellularLocation>
</comment>
<comment type="miscellaneous">
    <text>Most taste cells may be activated by a limited number of bitter compounds; individual taste cells can discriminate among bitter stimuli.</text>
</comment>
<comment type="similarity">
    <text evidence="3">Belongs to the G-protein coupled receptor T2R family.</text>
</comment>
<evidence type="ECO:0000250" key="1"/>
<evidence type="ECO:0000255" key="2"/>
<evidence type="ECO:0000305" key="3"/>
<sequence>MLSVVEGIFIFVVISESVFGVLGNGFIGLVNCIDCAKNKLSTIGFILTGLAISRIFLIWVIITDGFIQIFSPDIYASGNLIEYISYIWVIGNQSSMWFATSLSIFYFLKIANFSNYIFLWLKSRTNMVLPFMMAFLLISSLLNFAHIVKILNDHKMKNDTVWHLNMYKSEYFIKQILLNLGVIFFFTLSLITCVLLIISLWRHNRQMQSNVTGLRDSNTEAHVKAMKVLISFIILFILYFIGMALEISRFTVPENKLLLMFGMTTTAIYPWGHSFILILGNSKLKQASLRVLQQLKCCEKRKKSQSHI</sequence>
<dbReference type="EMBL" id="AY724977">
    <property type="protein sequence ID" value="AAU21169.1"/>
    <property type="molecule type" value="Genomic_DNA"/>
</dbReference>
<dbReference type="SMR" id="Q645V0"/>
<dbReference type="GlyCosmos" id="Q645V0">
    <property type="glycosylation" value="2 sites, No reported glycans"/>
</dbReference>
<dbReference type="GO" id="GO:0005886">
    <property type="term" value="C:plasma membrane"/>
    <property type="evidence" value="ECO:0007669"/>
    <property type="project" value="UniProtKB-ARBA"/>
</dbReference>
<dbReference type="GO" id="GO:0033038">
    <property type="term" value="F:bitter taste receptor activity"/>
    <property type="evidence" value="ECO:0007669"/>
    <property type="project" value="InterPro"/>
</dbReference>
<dbReference type="GO" id="GO:0004930">
    <property type="term" value="F:G protein-coupled receptor activity"/>
    <property type="evidence" value="ECO:0007669"/>
    <property type="project" value="UniProtKB-KW"/>
</dbReference>
<dbReference type="CDD" id="cd15021">
    <property type="entry name" value="7tm_TAS2R10"/>
    <property type="match status" value="1"/>
</dbReference>
<dbReference type="FunFam" id="1.20.1070.10:FF:000042">
    <property type="entry name" value="Taste receptor type 2 member 7"/>
    <property type="match status" value="1"/>
</dbReference>
<dbReference type="Gene3D" id="1.20.1070.10">
    <property type="entry name" value="Rhodopsin 7-helix transmembrane proteins"/>
    <property type="match status" value="1"/>
</dbReference>
<dbReference type="InterPro" id="IPR007960">
    <property type="entry name" value="TAS2R"/>
</dbReference>
<dbReference type="PANTHER" id="PTHR11394">
    <property type="entry name" value="TASTE RECEPTOR TYPE 2"/>
    <property type="match status" value="1"/>
</dbReference>
<dbReference type="PANTHER" id="PTHR11394:SF63">
    <property type="entry name" value="TASTE RECEPTOR TYPE 2 MEMBER 10"/>
    <property type="match status" value="1"/>
</dbReference>
<dbReference type="Pfam" id="PF05296">
    <property type="entry name" value="TAS2R"/>
    <property type="match status" value="1"/>
</dbReference>
<dbReference type="SUPFAM" id="SSF81321">
    <property type="entry name" value="Family A G protein-coupled receptor-like"/>
    <property type="match status" value="1"/>
</dbReference>